<keyword id="KW-0066">ATP synthesis</keyword>
<keyword id="KW-0067">ATP-binding</keyword>
<keyword id="KW-1003">Cell membrane</keyword>
<keyword id="KW-0139">CF(1)</keyword>
<keyword id="KW-0375">Hydrogen ion transport</keyword>
<keyword id="KW-0406">Ion transport</keyword>
<keyword id="KW-0472">Membrane</keyword>
<keyword id="KW-0547">Nucleotide-binding</keyword>
<keyword id="KW-1278">Translocase</keyword>
<keyword id="KW-0813">Transport</keyword>
<gene>
    <name evidence="1" type="primary">atpD</name>
    <name type="ordered locus">SaurJH9_2139</name>
</gene>
<sequence>MGIGRVTQVMGPVIDVRFEHNEVPKINNALVIDVPKEEGTIQLTLEVALQLGDDVVRTIAMDSTDGVQRGMDVKDTGKEISVPVGDETLGRVFNVLGETIDLKEEISDSVRRDPIHRQAPAFDELSTEVQILETGIKVVDLLAPYIKGGKIGLFGGAGVGKTVLIQELINNIAQEHGGISVFAGVGERTREGNDLYFEMSDSGVIKKTAMVFGQMNEPPGARMRVALSGLTMAEYFRDEQGQDVLLFIDNIFRFTQAGSEVSALLGRMPSAVGYQPTLATEMGQLQERITSTTKGSVTSIQAVFVPADDYTDPAPATAFAHLDATTNLERKLTEMGIYPAVDPLASTSRALEPSIVGQEHYEVARDVQSTLQKYRELQDIIAILGMDELSDEDKQTVERARRIQFFLSQNFHVAEQFTGQKGSYVPVKTTVANFKDILDGKYDHIPEDAFRLVGSMDDVIAKAKDMGVEV</sequence>
<organism>
    <name type="scientific">Staphylococcus aureus (strain JH9)</name>
    <dbReference type="NCBI Taxonomy" id="359786"/>
    <lineage>
        <taxon>Bacteria</taxon>
        <taxon>Bacillati</taxon>
        <taxon>Bacillota</taxon>
        <taxon>Bacilli</taxon>
        <taxon>Bacillales</taxon>
        <taxon>Staphylococcaceae</taxon>
        <taxon>Staphylococcus</taxon>
    </lineage>
</organism>
<comment type="function">
    <text evidence="1">Produces ATP from ADP in the presence of a proton gradient across the membrane. The catalytic sites are hosted primarily by the beta subunits.</text>
</comment>
<comment type="catalytic activity">
    <reaction evidence="1">
        <text>ATP + H2O + 4 H(+)(in) = ADP + phosphate + 5 H(+)(out)</text>
        <dbReference type="Rhea" id="RHEA:57720"/>
        <dbReference type="ChEBI" id="CHEBI:15377"/>
        <dbReference type="ChEBI" id="CHEBI:15378"/>
        <dbReference type="ChEBI" id="CHEBI:30616"/>
        <dbReference type="ChEBI" id="CHEBI:43474"/>
        <dbReference type="ChEBI" id="CHEBI:456216"/>
        <dbReference type="EC" id="7.1.2.2"/>
    </reaction>
</comment>
<comment type="subunit">
    <text evidence="1">F-type ATPases have 2 components, CF(1) - the catalytic core - and CF(0) - the membrane proton channel. CF(1) has five subunits: alpha(3), beta(3), gamma(1), delta(1), epsilon(1). CF(0) has three main subunits: a(1), b(2) and c(9-12). The alpha and beta chains form an alternating ring which encloses part of the gamma chain. CF(1) is attached to CF(0) by a central stalk formed by the gamma and epsilon chains, while a peripheral stalk is formed by the delta and b chains.</text>
</comment>
<comment type="subcellular location">
    <subcellularLocation>
        <location evidence="1">Cell membrane</location>
        <topology evidence="1">Peripheral membrane protein</topology>
    </subcellularLocation>
</comment>
<comment type="similarity">
    <text evidence="1">Belongs to the ATPase alpha/beta chains family.</text>
</comment>
<name>ATPB_STAA9</name>
<reference key="1">
    <citation type="submission" date="2007-05" db="EMBL/GenBank/DDBJ databases">
        <title>Complete sequence of chromosome of Staphylococcus aureus subsp. aureus JH9.</title>
        <authorList>
            <consortium name="US DOE Joint Genome Institute"/>
            <person name="Copeland A."/>
            <person name="Lucas S."/>
            <person name="Lapidus A."/>
            <person name="Barry K."/>
            <person name="Detter J.C."/>
            <person name="Glavina del Rio T."/>
            <person name="Hammon N."/>
            <person name="Israni S."/>
            <person name="Pitluck S."/>
            <person name="Chain P."/>
            <person name="Malfatti S."/>
            <person name="Shin M."/>
            <person name="Vergez L."/>
            <person name="Schmutz J."/>
            <person name="Larimer F."/>
            <person name="Land M."/>
            <person name="Hauser L."/>
            <person name="Kyrpides N."/>
            <person name="Kim E."/>
            <person name="Tomasz A."/>
            <person name="Richardson P."/>
        </authorList>
    </citation>
    <scope>NUCLEOTIDE SEQUENCE [LARGE SCALE GENOMIC DNA]</scope>
    <source>
        <strain>JH9</strain>
    </source>
</reference>
<proteinExistence type="inferred from homology"/>
<dbReference type="EC" id="7.1.2.2" evidence="1"/>
<dbReference type="EMBL" id="CP000703">
    <property type="protein sequence ID" value="ABQ49921.1"/>
    <property type="molecule type" value="Genomic_DNA"/>
</dbReference>
<dbReference type="RefSeq" id="WP_000511135.1">
    <property type="nucleotide sequence ID" value="NC_009487.1"/>
</dbReference>
<dbReference type="SMR" id="A5IUP8"/>
<dbReference type="GeneID" id="98346410"/>
<dbReference type="KEGG" id="saj:SaurJH9_2139"/>
<dbReference type="HOGENOM" id="CLU_022398_0_2_9"/>
<dbReference type="GO" id="GO:0005886">
    <property type="term" value="C:plasma membrane"/>
    <property type="evidence" value="ECO:0007669"/>
    <property type="project" value="UniProtKB-SubCell"/>
</dbReference>
<dbReference type="GO" id="GO:0045259">
    <property type="term" value="C:proton-transporting ATP synthase complex"/>
    <property type="evidence" value="ECO:0007669"/>
    <property type="project" value="UniProtKB-KW"/>
</dbReference>
<dbReference type="GO" id="GO:0005524">
    <property type="term" value="F:ATP binding"/>
    <property type="evidence" value="ECO:0007669"/>
    <property type="project" value="UniProtKB-UniRule"/>
</dbReference>
<dbReference type="GO" id="GO:0016887">
    <property type="term" value="F:ATP hydrolysis activity"/>
    <property type="evidence" value="ECO:0007669"/>
    <property type="project" value="InterPro"/>
</dbReference>
<dbReference type="GO" id="GO:0046933">
    <property type="term" value="F:proton-transporting ATP synthase activity, rotational mechanism"/>
    <property type="evidence" value="ECO:0007669"/>
    <property type="project" value="UniProtKB-UniRule"/>
</dbReference>
<dbReference type="CDD" id="cd18110">
    <property type="entry name" value="ATP-synt_F1_beta_C"/>
    <property type="match status" value="1"/>
</dbReference>
<dbReference type="CDD" id="cd18115">
    <property type="entry name" value="ATP-synt_F1_beta_N"/>
    <property type="match status" value="1"/>
</dbReference>
<dbReference type="CDD" id="cd01133">
    <property type="entry name" value="F1-ATPase_beta_CD"/>
    <property type="match status" value="1"/>
</dbReference>
<dbReference type="FunFam" id="1.10.1140.10:FF:000001">
    <property type="entry name" value="ATP synthase subunit beta"/>
    <property type="match status" value="1"/>
</dbReference>
<dbReference type="FunFam" id="2.40.10.170:FF:000005">
    <property type="entry name" value="ATP synthase subunit beta"/>
    <property type="match status" value="1"/>
</dbReference>
<dbReference type="FunFam" id="3.40.50.300:FF:000004">
    <property type="entry name" value="ATP synthase subunit beta"/>
    <property type="match status" value="1"/>
</dbReference>
<dbReference type="Gene3D" id="2.40.10.170">
    <property type="match status" value="1"/>
</dbReference>
<dbReference type="Gene3D" id="1.10.1140.10">
    <property type="entry name" value="Bovine Mitochondrial F1-atpase, Atp Synthase Beta Chain, Chain D, domain 3"/>
    <property type="match status" value="1"/>
</dbReference>
<dbReference type="Gene3D" id="3.40.50.300">
    <property type="entry name" value="P-loop containing nucleotide triphosphate hydrolases"/>
    <property type="match status" value="1"/>
</dbReference>
<dbReference type="HAMAP" id="MF_01347">
    <property type="entry name" value="ATP_synth_beta_bact"/>
    <property type="match status" value="1"/>
</dbReference>
<dbReference type="InterPro" id="IPR003593">
    <property type="entry name" value="AAA+_ATPase"/>
</dbReference>
<dbReference type="InterPro" id="IPR055190">
    <property type="entry name" value="ATP-synt_VA_C"/>
</dbReference>
<dbReference type="InterPro" id="IPR005722">
    <property type="entry name" value="ATP_synth_F1_bsu"/>
</dbReference>
<dbReference type="InterPro" id="IPR020003">
    <property type="entry name" value="ATPase_a/bsu_AS"/>
</dbReference>
<dbReference type="InterPro" id="IPR050053">
    <property type="entry name" value="ATPase_alpha/beta_chains"/>
</dbReference>
<dbReference type="InterPro" id="IPR004100">
    <property type="entry name" value="ATPase_F1/V1/A1_a/bsu_N"/>
</dbReference>
<dbReference type="InterPro" id="IPR036121">
    <property type="entry name" value="ATPase_F1/V1/A1_a/bsu_N_sf"/>
</dbReference>
<dbReference type="InterPro" id="IPR000194">
    <property type="entry name" value="ATPase_F1/V1/A1_a/bsu_nucl-bd"/>
</dbReference>
<dbReference type="InterPro" id="IPR024034">
    <property type="entry name" value="ATPase_F1/V1_b/a_C"/>
</dbReference>
<dbReference type="InterPro" id="IPR027417">
    <property type="entry name" value="P-loop_NTPase"/>
</dbReference>
<dbReference type="NCBIfam" id="TIGR01039">
    <property type="entry name" value="atpD"/>
    <property type="match status" value="1"/>
</dbReference>
<dbReference type="PANTHER" id="PTHR15184">
    <property type="entry name" value="ATP SYNTHASE"/>
    <property type="match status" value="1"/>
</dbReference>
<dbReference type="PANTHER" id="PTHR15184:SF71">
    <property type="entry name" value="ATP SYNTHASE SUBUNIT BETA, MITOCHONDRIAL"/>
    <property type="match status" value="1"/>
</dbReference>
<dbReference type="Pfam" id="PF00006">
    <property type="entry name" value="ATP-synt_ab"/>
    <property type="match status" value="1"/>
</dbReference>
<dbReference type="Pfam" id="PF02874">
    <property type="entry name" value="ATP-synt_ab_N"/>
    <property type="match status" value="1"/>
</dbReference>
<dbReference type="Pfam" id="PF22919">
    <property type="entry name" value="ATP-synt_VA_C"/>
    <property type="match status" value="1"/>
</dbReference>
<dbReference type="SMART" id="SM00382">
    <property type="entry name" value="AAA"/>
    <property type="match status" value="1"/>
</dbReference>
<dbReference type="SUPFAM" id="SSF47917">
    <property type="entry name" value="C-terminal domain of alpha and beta subunits of F1 ATP synthase"/>
    <property type="match status" value="1"/>
</dbReference>
<dbReference type="SUPFAM" id="SSF50615">
    <property type="entry name" value="N-terminal domain of alpha and beta subunits of F1 ATP synthase"/>
    <property type="match status" value="1"/>
</dbReference>
<dbReference type="SUPFAM" id="SSF52540">
    <property type="entry name" value="P-loop containing nucleoside triphosphate hydrolases"/>
    <property type="match status" value="1"/>
</dbReference>
<dbReference type="PROSITE" id="PS00152">
    <property type="entry name" value="ATPASE_ALPHA_BETA"/>
    <property type="match status" value="1"/>
</dbReference>
<protein>
    <recommendedName>
        <fullName evidence="1">ATP synthase subunit beta</fullName>
        <ecNumber evidence="1">7.1.2.2</ecNumber>
    </recommendedName>
    <alternativeName>
        <fullName evidence="1">ATP synthase F1 sector subunit beta</fullName>
    </alternativeName>
    <alternativeName>
        <fullName evidence="1">F-ATPase subunit beta</fullName>
    </alternativeName>
</protein>
<accession>A5IUP8</accession>
<feature type="chain" id="PRO_1000086928" description="ATP synthase subunit beta">
    <location>
        <begin position="1"/>
        <end position="470"/>
    </location>
</feature>
<feature type="binding site" evidence="1">
    <location>
        <begin position="155"/>
        <end position="162"/>
    </location>
    <ligand>
        <name>ATP</name>
        <dbReference type="ChEBI" id="CHEBI:30616"/>
    </ligand>
</feature>
<evidence type="ECO:0000255" key="1">
    <source>
        <dbReference type="HAMAP-Rule" id="MF_01347"/>
    </source>
</evidence>